<accession>A6NJ69</accession>
<dbReference type="EMBL" id="AC011379">
    <property type="status" value="NOT_ANNOTATED_CDS"/>
    <property type="molecule type" value="Genomic_DNA"/>
</dbReference>
<dbReference type="CCDS" id="CCDS34244.1"/>
<dbReference type="RefSeq" id="NP_001007190.1">
    <property type="nucleotide sequence ID" value="NM_001007189.2"/>
</dbReference>
<dbReference type="BioGRID" id="138896">
    <property type="interactions" value="2"/>
</dbReference>
<dbReference type="FunCoup" id="A6NJ69">
    <property type="interactions" value="1"/>
</dbReference>
<dbReference type="IntAct" id="A6NJ69">
    <property type="interactions" value="1"/>
</dbReference>
<dbReference type="STRING" id="9606.ENSP00000327344"/>
<dbReference type="BioMuta" id="IGIP"/>
<dbReference type="PaxDb" id="9606-ENSP00000327344"/>
<dbReference type="Antibodypedia" id="62605">
    <property type="antibodies" value="11 antibodies from 6 providers"/>
</dbReference>
<dbReference type="DNASU" id="492311"/>
<dbReference type="Ensembl" id="ENST00000333305.5">
    <property type="protein sequence ID" value="ENSP00000327344.3"/>
    <property type="gene ID" value="ENSG00000182700.5"/>
</dbReference>
<dbReference type="GeneID" id="492311"/>
<dbReference type="KEGG" id="hsa:492311"/>
<dbReference type="MANE-Select" id="ENST00000333305.5">
    <property type="protein sequence ID" value="ENSP00000327344.3"/>
    <property type="RefSeq nucleotide sequence ID" value="NM_001007189.2"/>
    <property type="RefSeq protein sequence ID" value="NP_001007190.1"/>
</dbReference>
<dbReference type="UCSC" id="uc003lfb.2">
    <property type="organism name" value="human"/>
</dbReference>
<dbReference type="AGR" id="HGNC:33847"/>
<dbReference type="CTD" id="492311"/>
<dbReference type="GeneCards" id="IGIP"/>
<dbReference type="HGNC" id="HGNC:33847">
    <property type="gene designation" value="IGIP"/>
</dbReference>
<dbReference type="HPA" id="ENSG00000182700">
    <property type="expression patterns" value="Tissue enhanced (brain)"/>
</dbReference>
<dbReference type="neXtProt" id="NX_A6NJ69"/>
<dbReference type="PharmGKB" id="PA164717341"/>
<dbReference type="VEuPathDB" id="HostDB:ENSG00000182700"/>
<dbReference type="eggNOG" id="ENOG502TDWN">
    <property type="taxonomic scope" value="Eukaryota"/>
</dbReference>
<dbReference type="GeneTree" id="ENSGT00390000001137"/>
<dbReference type="HOGENOM" id="CLU_3068056_0_0_1"/>
<dbReference type="InParanoid" id="A6NJ69"/>
<dbReference type="OMA" id="CSYHMKK"/>
<dbReference type="OrthoDB" id="9818125at2759"/>
<dbReference type="PAN-GO" id="A6NJ69">
    <property type="GO annotations" value="0 GO annotations based on evolutionary models"/>
</dbReference>
<dbReference type="PhylomeDB" id="A6NJ69"/>
<dbReference type="TreeFam" id="TF341188"/>
<dbReference type="PathwayCommons" id="A6NJ69"/>
<dbReference type="SignaLink" id="A6NJ69"/>
<dbReference type="BioGRID-ORCS" id="492311">
    <property type="hits" value="13 hits in 1132 CRISPR screens"/>
</dbReference>
<dbReference type="ChiTaRS" id="IGIP">
    <property type="organism name" value="human"/>
</dbReference>
<dbReference type="GenomeRNAi" id="492311"/>
<dbReference type="Pharos" id="A6NJ69">
    <property type="development level" value="Tdark"/>
</dbReference>
<dbReference type="PRO" id="PR:A6NJ69"/>
<dbReference type="Proteomes" id="UP000005640">
    <property type="component" value="Chromosome 5"/>
</dbReference>
<dbReference type="RNAct" id="A6NJ69">
    <property type="molecule type" value="protein"/>
</dbReference>
<dbReference type="Bgee" id="ENSG00000182700">
    <property type="expression patterns" value="Expressed in hypothalamus and 96 other cell types or tissues"/>
</dbReference>
<dbReference type="ExpressionAtlas" id="A6NJ69">
    <property type="expression patterns" value="baseline and differential"/>
</dbReference>
<dbReference type="GO" id="GO:0005576">
    <property type="term" value="C:extracellular region"/>
    <property type="evidence" value="ECO:0007669"/>
    <property type="project" value="UniProtKB-SubCell"/>
</dbReference>
<dbReference type="InterPro" id="IPR038815">
    <property type="entry name" value="IGIP"/>
</dbReference>
<dbReference type="PANTHER" id="PTHR39224">
    <property type="entry name" value="IGA-INDUCING PROTEIN HOMOLOG"/>
    <property type="match status" value="1"/>
</dbReference>
<dbReference type="PANTHER" id="PTHR39224:SF1">
    <property type="entry name" value="IGA-INDUCING PROTEIN HOMOLOG"/>
    <property type="match status" value="1"/>
</dbReference>
<feature type="signal peptide" evidence="2">
    <location>
        <begin position="1"/>
        <end position="30"/>
    </location>
</feature>
<feature type="chain" id="PRO_0000332153" description="IgA-inducing protein homolog">
    <location>
        <begin position="31"/>
        <end position="53"/>
    </location>
</feature>
<organism>
    <name type="scientific">Homo sapiens</name>
    <name type="common">Human</name>
    <dbReference type="NCBI Taxonomy" id="9606"/>
    <lineage>
        <taxon>Eukaryota</taxon>
        <taxon>Metazoa</taxon>
        <taxon>Chordata</taxon>
        <taxon>Craniata</taxon>
        <taxon>Vertebrata</taxon>
        <taxon>Euteleostomi</taxon>
        <taxon>Mammalia</taxon>
        <taxon>Eutheria</taxon>
        <taxon>Euarchontoglires</taxon>
        <taxon>Primates</taxon>
        <taxon>Haplorrhini</taxon>
        <taxon>Catarrhini</taxon>
        <taxon>Hominidae</taxon>
        <taxon>Homo</taxon>
    </lineage>
</organism>
<keyword id="KW-1185">Reference proteome</keyword>
<keyword id="KW-0964">Secreted</keyword>
<keyword id="KW-0732">Signal</keyword>
<evidence type="ECO:0000250" key="1"/>
<evidence type="ECO:0000255" key="2"/>
<evidence type="ECO:0000305" key="3"/>
<reference key="1">
    <citation type="journal article" date="2004" name="Nature">
        <title>The DNA sequence and comparative analysis of human chromosome 5.</title>
        <authorList>
            <person name="Schmutz J."/>
            <person name="Martin J."/>
            <person name="Terry A."/>
            <person name="Couronne O."/>
            <person name="Grimwood J."/>
            <person name="Lowry S."/>
            <person name="Gordon L.A."/>
            <person name="Scott D."/>
            <person name="Xie G."/>
            <person name="Huang W."/>
            <person name="Hellsten U."/>
            <person name="Tran-Gyamfi M."/>
            <person name="She X."/>
            <person name="Prabhakar S."/>
            <person name="Aerts A."/>
            <person name="Altherr M."/>
            <person name="Bajorek E."/>
            <person name="Black S."/>
            <person name="Branscomb E."/>
            <person name="Caoile C."/>
            <person name="Challacombe J.F."/>
            <person name="Chan Y.M."/>
            <person name="Denys M."/>
            <person name="Detter J.C."/>
            <person name="Escobar J."/>
            <person name="Flowers D."/>
            <person name="Fotopulos D."/>
            <person name="Glavina T."/>
            <person name="Gomez M."/>
            <person name="Gonzales E."/>
            <person name="Goodstein D."/>
            <person name="Grigoriev I."/>
            <person name="Groza M."/>
            <person name="Hammon N."/>
            <person name="Hawkins T."/>
            <person name="Haydu L."/>
            <person name="Israni S."/>
            <person name="Jett J."/>
            <person name="Kadner K."/>
            <person name="Kimball H."/>
            <person name="Kobayashi A."/>
            <person name="Lopez F."/>
            <person name="Lou Y."/>
            <person name="Martinez D."/>
            <person name="Medina C."/>
            <person name="Morgan J."/>
            <person name="Nandkeshwar R."/>
            <person name="Noonan J.P."/>
            <person name="Pitluck S."/>
            <person name="Pollard M."/>
            <person name="Predki P."/>
            <person name="Priest J."/>
            <person name="Ramirez L."/>
            <person name="Retterer J."/>
            <person name="Rodriguez A."/>
            <person name="Rogers S."/>
            <person name="Salamov A."/>
            <person name="Salazar A."/>
            <person name="Thayer N."/>
            <person name="Tice H."/>
            <person name="Tsai M."/>
            <person name="Ustaszewska A."/>
            <person name="Vo N."/>
            <person name="Wheeler J."/>
            <person name="Wu K."/>
            <person name="Yang J."/>
            <person name="Dickson M."/>
            <person name="Cheng J.-F."/>
            <person name="Eichler E.E."/>
            <person name="Olsen A."/>
            <person name="Pennacchio L.A."/>
            <person name="Rokhsar D.S."/>
            <person name="Richardson P."/>
            <person name="Lucas S.M."/>
            <person name="Myers R.M."/>
            <person name="Rubin E.M."/>
        </authorList>
    </citation>
    <scope>NUCLEOTIDE SEQUENCE [LARGE SCALE GENOMIC DNA]</scope>
</reference>
<name>IGIP_HUMAN</name>
<comment type="function">
    <text evidence="1">Enhances IgA secretion from B-cells stimulated via CD40.</text>
</comment>
<comment type="subcellular location">
    <subcellularLocation>
        <location evidence="1">Secreted</location>
    </subcellularLocation>
</comment>
<comment type="caution">
    <text evidence="3">It is uncertain whether Met-1 or Met-7 is the initiator.</text>
</comment>
<protein>
    <recommendedName>
        <fullName>IgA-inducing protein homolog</fullName>
    </recommendedName>
</protein>
<sequence>MCSYYHMKKRSVSGCNITIFAVMFSHLSAGKSPCGNQANVLCISRLEFVQYQS</sequence>
<gene>
    <name type="primary">IGIP</name>
    <name type="synonym">C5orf53</name>
</gene>
<proteinExistence type="inferred from homology"/>